<sequence length="129" mass="14019">MSGRGKQGGKVRAKAKSRSSRAGLQFPVGRVHRLLRKGNYAERVGAGAPVYLAAVLEYLTAEILELAGNAARDNKKTRIIPRHLQLAIRNDEELNKLLGKVTIAQGGVLPNIQAVLLPKKTESQKTKSK</sequence>
<keyword id="KW-0007">Acetylation</keyword>
<keyword id="KW-0158">Chromosome</keyword>
<keyword id="KW-0238">DNA-binding</keyword>
<keyword id="KW-1017">Isopeptide bond</keyword>
<keyword id="KW-0488">Methylation</keyword>
<keyword id="KW-0544">Nucleosome core</keyword>
<keyword id="KW-0539">Nucleus</keyword>
<keyword id="KW-0597">Phosphoprotein</keyword>
<keyword id="KW-1185">Reference proteome</keyword>
<keyword id="KW-0832">Ubl conjugation</keyword>
<dbReference type="EMBL" id="BC103043">
    <property type="protein sequence ID" value="AAI03044.1"/>
    <property type="molecule type" value="mRNA"/>
</dbReference>
<dbReference type="RefSeq" id="NP_001071557.1">
    <property type="nucleotide sequence ID" value="NM_001078089.2"/>
</dbReference>
<dbReference type="SMR" id="Q3ZBX9"/>
<dbReference type="FunCoup" id="Q3ZBX9">
    <property type="interactions" value="1072"/>
</dbReference>
<dbReference type="STRING" id="9913.ENSBTAP00000040641"/>
<dbReference type="PaxDb" id="9913-ENSBTAP00000040641"/>
<dbReference type="Ensembl" id="ENSBTAT00000043046.4">
    <property type="protein sequence ID" value="ENSBTAP00000040641.2"/>
    <property type="gene ID" value="ENSBTAG00000030503.4"/>
</dbReference>
<dbReference type="Ensembl" id="ENSBTAT00000122135.1">
    <property type="protein sequence ID" value="ENSBTAP00000080311.1"/>
    <property type="gene ID" value="ENSBTAG00000030503.4"/>
</dbReference>
<dbReference type="GeneID" id="618489"/>
<dbReference type="KEGG" id="bta:618489"/>
<dbReference type="CTD" id="55766"/>
<dbReference type="VEuPathDB" id="HostDB:ENSBTAG00000030503"/>
<dbReference type="VGNC" id="VGNC:83623">
    <property type="gene designation" value="H2AJ"/>
</dbReference>
<dbReference type="eggNOG" id="KOG1756">
    <property type="taxonomic scope" value="Eukaryota"/>
</dbReference>
<dbReference type="GeneTree" id="ENSGT00940000153118"/>
<dbReference type="HOGENOM" id="CLU_062828_3_1_1"/>
<dbReference type="InParanoid" id="Q3ZBX9"/>
<dbReference type="OMA" id="NHPLACK"/>
<dbReference type="OrthoDB" id="1104503at2759"/>
<dbReference type="TreeFam" id="TF300137"/>
<dbReference type="Reactome" id="R-BTA-110330">
    <property type="pathway name" value="Recognition and association of DNA glycosylase with site containing an affected purine"/>
</dbReference>
<dbReference type="Reactome" id="R-BTA-110331">
    <property type="pathway name" value="Cleavage of the damaged purine"/>
</dbReference>
<dbReference type="Reactome" id="R-BTA-171306">
    <property type="pathway name" value="Packaging Of Telomere Ends"/>
</dbReference>
<dbReference type="Reactome" id="R-BTA-201722">
    <property type="pathway name" value="Formation of the beta-catenin:TCF transactivating complex"/>
</dbReference>
<dbReference type="Reactome" id="R-BTA-212300">
    <property type="pathway name" value="PRC2 methylates histones and DNA"/>
</dbReference>
<dbReference type="Reactome" id="R-BTA-2299718">
    <property type="pathway name" value="Condensation of Prophase Chromosomes"/>
</dbReference>
<dbReference type="Reactome" id="R-BTA-2559580">
    <property type="pathway name" value="Oxidative Stress Induced Senescence"/>
</dbReference>
<dbReference type="Reactome" id="R-BTA-2559582">
    <property type="pathway name" value="Senescence-Associated Secretory Phenotype (SASP)"/>
</dbReference>
<dbReference type="Reactome" id="R-BTA-2559586">
    <property type="pathway name" value="DNA Damage/Telomere Stress Induced Senescence"/>
</dbReference>
<dbReference type="Reactome" id="R-BTA-3214858">
    <property type="pathway name" value="RMTs methylate histone arginines"/>
</dbReference>
<dbReference type="Reactome" id="R-BTA-427359">
    <property type="pathway name" value="SIRT1 negatively regulates rRNA expression"/>
</dbReference>
<dbReference type="Reactome" id="R-BTA-427413">
    <property type="pathway name" value="NoRC negatively regulates rRNA expression"/>
</dbReference>
<dbReference type="Reactome" id="R-BTA-5250924">
    <property type="pathway name" value="B-WICH complex positively regulates rRNA expression"/>
</dbReference>
<dbReference type="Reactome" id="R-BTA-5578749">
    <property type="pathway name" value="Transcriptional regulation by small RNAs"/>
</dbReference>
<dbReference type="Reactome" id="R-BTA-5625886">
    <property type="pathway name" value="Activated PKN1 stimulates transcription of AR (androgen receptor) regulated genes KLK2 and KLK3"/>
</dbReference>
<dbReference type="Reactome" id="R-BTA-606279">
    <property type="pathway name" value="Deposition of new CENPA-containing nucleosomes at the centromere"/>
</dbReference>
<dbReference type="Reactome" id="R-BTA-68616">
    <property type="pathway name" value="Assembly of the ORC complex at the origin of replication"/>
</dbReference>
<dbReference type="Reactome" id="R-BTA-73728">
    <property type="pathway name" value="RNA Polymerase I Promoter Opening"/>
</dbReference>
<dbReference type="Reactome" id="R-BTA-73772">
    <property type="pathway name" value="RNA Polymerase I Promoter Escape"/>
</dbReference>
<dbReference type="Reactome" id="R-BTA-8936459">
    <property type="pathway name" value="RUNX1 regulates genes involved in megakaryocyte differentiation and platelet function"/>
</dbReference>
<dbReference type="Reactome" id="R-BTA-9018519">
    <property type="pathway name" value="Estrogen-dependent gene expression"/>
</dbReference>
<dbReference type="Reactome" id="R-BTA-9670095">
    <property type="pathway name" value="Inhibition of DNA recombination at telomere"/>
</dbReference>
<dbReference type="Reactome" id="R-BTA-9841922">
    <property type="pathway name" value="MLL4 and MLL3 complexes regulate expression of PPARG target genes in adipogenesis and hepatic steatosis"/>
</dbReference>
<dbReference type="Reactome" id="R-BTA-9843940">
    <property type="pathway name" value="Regulation of endogenous retroelements by KRAB-ZFP proteins"/>
</dbReference>
<dbReference type="Reactome" id="R-BTA-9843970">
    <property type="pathway name" value="Regulation of endogenous retroelements by the Human Silencing Hub (HUSH) complex"/>
</dbReference>
<dbReference type="Proteomes" id="UP000009136">
    <property type="component" value="Chromosome 5"/>
</dbReference>
<dbReference type="Bgee" id="ENSBTAG00000030503">
    <property type="expression patterns" value="Expressed in nasal cavity mucosa and 109 other cell types or tissues"/>
</dbReference>
<dbReference type="GO" id="GO:0000786">
    <property type="term" value="C:nucleosome"/>
    <property type="evidence" value="ECO:0000318"/>
    <property type="project" value="GO_Central"/>
</dbReference>
<dbReference type="GO" id="GO:0005634">
    <property type="term" value="C:nucleus"/>
    <property type="evidence" value="ECO:0000318"/>
    <property type="project" value="GO_Central"/>
</dbReference>
<dbReference type="GO" id="GO:0003677">
    <property type="term" value="F:DNA binding"/>
    <property type="evidence" value="ECO:0007669"/>
    <property type="project" value="UniProtKB-KW"/>
</dbReference>
<dbReference type="GO" id="GO:0046982">
    <property type="term" value="F:protein heterodimerization activity"/>
    <property type="evidence" value="ECO:0007669"/>
    <property type="project" value="InterPro"/>
</dbReference>
<dbReference type="GO" id="GO:0030527">
    <property type="term" value="F:structural constituent of chromatin"/>
    <property type="evidence" value="ECO:0000318"/>
    <property type="project" value="GO_Central"/>
</dbReference>
<dbReference type="GO" id="GO:0031507">
    <property type="term" value="P:heterochromatin formation"/>
    <property type="evidence" value="ECO:0000318"/>
    <property type="project" value="GO_Central"/>
</dbReference>
<dbReference type="CDD" id="cd00074">
    <property type="entry name" value="HFD_H2A"/>
    <property type="match status" value="1"/>
</dbReference>
<dbReference type="FunFam" id="1.10.20.10:FF:000004">
    <property type="entry name" value="Histone H2A"/>
    <property type="match status" value="1"/>
</dbReference>
<dbReference type="Gene3D" id="1.10.20.10">
    <property type="entry name" value="Histone, subunit A"/>
    <property type="match status" value="1"/>
</dbReference>
<dbReference type="InterPro" id="IPR009072">
    <property type="entry name" value="Histone-fold"/>
</dbReference>
<dbReference type="InterPro" id="IPR002119">
    <property type="entry name" value="Histone_H2A"/>
</dbReference>
<dbReference type="InterPro" id="IPR007125">
    <property type="entry name" value="Histone_H2A/H2B/H3"/>
</dbReference>
<dbReference type="InterPro" id="IPR032454">
    <property type="entry name" value="Histone_H2A_C"/>
</dbReference>
<dbReference type="InterPro" id="IPR032458">
    <property type="entry name" value="Histone_H2A_CS"/>
</dbReference>
<dbReference type="PANTHER" id="PTHR23430">
    <property type="entry name" value="HISTONE H2A"/>
    <property type="match status" value="1"/>
</dbReference>
<dbReference type="Pfam" id="PF00125">
    <property type="entry name" value="Histone"/>
    <property type="match status" value="1"/>
</dbReference>
<dbReference type="Pfam" id="PF16211">
    <property type="entry name" value="Histone_H2A_C"/>
    <property type="match status" value="1"/>
</dbReference>
<dbReference type="PRINTS" id="PR00620">
    <property type="entry name" value="HISTONEH2A"/>
</dbReference>
<dbReference type="SMART" id="SM00414">
    <property type="entry name" value="H2A"/>
    <property type="match status" value="1"/>
</dbReference>
<dbReference type="SUPFAM" id="SSF47113">
    <property type="entry name" value="Histone-fold"/>
    <property type="match status" value="1"/>
</dbReference>
<dbReference type="PROSITE" id="PS00046">
    <property type="entry name" value="HISTONE_H2A"/>
    <property type="match status" value="1"/>
</dbReference>
<proteinExistence type="evidence at transcript level"/>
<comment type="function">
    <text>Core component of nucleosome. Nucleosomes wrap and compact DNA into chromatin, limiting DNA accessibility to the cellular machineries which require DNA as a template. Histones thereby play a central role in transcription regulation, DNA repair, DNA replication and chromosomal stability. DNA accessibility is regulated via a complex set of post-translational modifications of histones, also called histone code, and nucleosome remodeling.</text>
</comment>
<comment type="subunit">
    <text>The nucleosome is a histone octamer containing two molecules each of H2A, H2B, H3 and H4 assembled in one H3-H4 heterotetramer and two H2A-H2B heterodimers. The octamer wraps approximately 147 bp of DNA.</text>
</comment>
<comment type="subcellular location">
    <subcellularLocation>
        <location evidence="1">Nucleus</location>
    </subcellularLocation>
    <subcellularLocation>
        <location evidence="1">Chromosome</location>
    </subcellularLocation>
</comment>
<comment type="PTM">
    <text evidence="1">Glutamine methylation at Gln-105 (H2AQ104me) by FBL is specifically dedicated to polymerase I. It is present at 35S ribosomal DNA locus and impairs binding of the FACT complex (By similarity).</text>
</comment>
<comment type="PTM">
    <text evidence="1">Monoubiquitination of Lys-120 (H2AXK119ub) gives a specific tag for epigenetic transcriptional repression. Following DNA double-strand breaks (DSBs), it is ubiquitinated through 'Lys-63' linkage of ubiquitin moieties (By similarity).</text>
</comment>
<comment type="PTM">
    <text evidence="1">Phosphorylation on Ser-2 (H2AS1ph) is enhanced during mitosis. Phosphorylation on Ser-2 by RPS6KA5/MSK1 directly represses transcription. Acetylation of H3 inhibits Ser-2 phosphorylation by RPS6KA5/MSK1. Phosphorylation at Thr-121 (H2AT120ph) by DCAF1 is present in the regulatory region of many tumor suppresor genes and down-regulates their transcription (By similarity).</text>
</comment>
<comment type="similarity">
    <text evidence="6">Belongs to the histone H2A family.</text>
</comment>
<accession>Q3ZBX9</accession>
<gene>
    <name evidence="4" type="primary">H2AJ</name>
</gene>
<organism>
    <name type="scientific">Bos taurus</name>
    <name type="common">Bovine</name>
    <dbReference type="NCBI Taxonomy" id="9913"/>
    <lineage>
        <taxon>Eukaryota</taxon>
        <taxon>Metazoa</taxon>
        <taxon>Chordata</taxon>
        <taxon>Craniata</taxon>
        <taxon>Vertebrata</taxon>
        <taxon>Euteleostomi</taxon>
        <taxon>Mammalia</taxon>
        <taxon>Eutheria</taxon>
        <taxon>Laurasiatheria</taxon>
        <taxon>Artiodactyla</taxon>
        <taxon>Ruminantia</taxon>
        <taxon>Pecora</taxon>
        <taxon>Bovidae</taxon>
        <taxon>Bovinae</taxon>
        <taxon>Bos</taxon>
    </lineage>
</organism>
<feature type="chain" id="PRO_0000344246" description="Histone H2A.J">
    <location>
        <begin position="1"/>
        <end position="129"/>
    </location>
</feature>
<feature type="region of interest" description="Disordered" evidence="5">
    <location>
        <begin position="1"/>
        <end position="22"/>
    </location>
</feature>
<feature type="compositionally biased region" description="Basic residues" evidence="5">
    <location>
        <begin position="7"/>
        <end position="19"/>
    </location>
</feature>
<feature type="modified residue" description="N6-acetyllysine" evidence="3">
    <location>
        <position position="6"/>
    </location>
</feature>
<feature type="modified residue" description="N6-acetyllysine" evidence="3">
    <location>
        <position position="10"/>
    </location>
</feature>
<feature type="modified residue" description="N6-lactoyllysine; alternate" evidence="2">
    <location>
        <position position="10"/>
    </location>
</feature>
<feature type="modified residue" description="N5-methylglutamine" evidence="1">
    <location>
        <position position="105"/>
    </location>
</feature>
<feature type="modified residue" description="Phosphothreonine; by DCAF1" evidence="1">
    <location>
        <position position="121"/>
    </location>
</feature>
<name>H2AJ_BOVIN</name>
<reference key="1">
    <citation type="submission" date="2005-08" db="EMBL/GenBank/DDBJ databases">
        <authorList>
            <consortium name="NIH - Mammalian Gene Collection (MGC) project"/>
        </authorList>
    </citation>
    <scope>NUCLEOTIDE SEQUENCE [LARGE SCALE MRNA]</scope>
    <source>
        <strain>Hereford</strain>
        <tissue>Hypothalamus</tissue>
    </source>
</reference>
<evidence type="ECO:0000250" key="1"/>
<evidence type="ECO:0000250" key="2">
    <source>
        <dbReference type="UniProtKB" id="P0C0S5"/>
    </source>
</evidence>
<evidence type="ECO:0000250" key="3">
    <source>
        <dbReference type="UniProtKB" id="Q8R1M2"/>
    </source>
</evidence>
<evidence type="ECO:0000250" key="4">
    <source>
        <dbReference type="UniProtKB" id="Q9BTM1"/>
    </source>
</evidence>
<evidence type="ECO:0000256" key="5">
    <source>
        <dbReference type="SAM" id="MobiDB-lite"/>
    </source>
</evidence>
<evidence type="ECO:0000305" key="6"/>
<protein>
    <recommendedName>
        <fullName>Histone H2A.J</fullName>
        <shortName>H2a/j</shortName>
    </recommendedName>
</protein>